<reference key="1">
    <citation type="submission" date="2008-02" db="EMBL/GenBank/DDBJ databases">
        <title>Complete sequence of chromosome 1 of Burkholderia cenocepacia MC0-3.</title>
        <authorList>
            <person name="Copeland A."/>
            <person name="Lucas S."/>
            <person name="Lapidus A."/>
            <person name="Barry K."/>
            <person name="Bruce D."/>
            <person name="Goodwin L."/>
            <person name="Glavina del Rio T."/>
            <person name="Dalin E."/>
            <person name="Tice H."/>
            <person name="Pitluck S."/>
            <person name="Chain P."/>
            <person name="Malfatti S."/>
            <person name="Shin M."/>
            <person name="Vergez L."/>
            <person name="Schmutz J."/>
            <person name="Larimer F."/>
            <person name="Land M."/>
            <person name="Hauser L."/>
            <person name="Kyrpides N."/>
            <person name="Mikhailova N."/>
            <person name="Tiedje J."/>
            <person name="Richardson P."/>
        </authorList>
    </citation>
    <scope>NUCLEOTIDE SEQUENCE [LARGE SCALE GENOMIC DNA]</scope>
    <source>
        <strain>MC0-3</strain>
    </source>
</reference>
<dbReference type="EC" id="3.5.3.23" evidence="1"/>
<dbReference type="EMBL" id="CP000958">
    <property type="protein sequence ID" value="ACA90336.1"/>
    <property type="molecule type" value="Genomic_DNA"/>
</dbReference>
<dbReference type="RefSeq" id="WP_012328182.1">
    <property type="nucleotide sequence ID" value="NC_010508.1"/>
</dbReference>
<dbReference type="SMR" id="B1JYT6"/>
<dbReference type="GeneID" id="83047955"/>
<dbReference type="KEGG" id="bcm:Bcenmc03_1161"/>
<dbReference type="HOGENOM" id="CLU_053835_0_0_4"/>
<dbReference type="UniPathway" id="UPA00185">
    <property type="reaction ID" value="UER00280"/>
</dbReference>
<dbReference type="Proteomes" id="UP000002169">
    <property type="component" value="Chromosome 1"/>
</dbReference>
<dbReference type="GO" id="GO:0009015">
    <property type="term" value="F:N-succinylarginine dihydrolase activity"/>
    <property type="evidence" value="ECO:0007669"/>
    <property type="project" value="UniProtKB-UniRule"/>
</dbReference>
<dbReference type="GO" id="GO:0019544">
    <property type="term" value="P:arginine catabolic process to glutamate"/>
    <property type="evidence" value="ECO:0007669"/>
    <property type="project" value="UniProtKB-UniRule"/>
</dbReference>
<dbReference type="GO" id="GO:0019545">
    <property type="term" value="P:arginine catabolic process to succinate"/>
    <property type="evidence" value="ECO:0007669"/>
    <property type="project" value="UniProtKB-UniRule"/>
</dbReference>
<dbReference type="Gene3D" id="3.75.10.20">
    <property type="entry name" value="Succinylarginine dihydrolase"/>
    <property type="match status" value="1"/>
</dbReference>
<dbReference type="HAMAP" id="MF_01172">
    <property type="entry name" value="AstB"/>
    <property type="match status" value="1"/>
</dbReference>
<dbReference type="InterPro" id="IPR037031">
    <property type="entry name" value="AstB_sf"/>
</dbReference>
<dbReference type="InterPro" id="IPR007079">
    <property type="entry name" value="SuccinylArg_d-Hdrlase_AstB"/>
</dbReference>
<dbReference type="NCBIfam" id="TIGR03241">
    <property type="entry name" value="arg_catab_astB"/>
    <property type="match status" value="1"/>
</dbReference>
<dbReference type="NCBIfam" id="NF009789">
    <property type="entry name" value="PRK13281.1"/>
    <property type="match status" value="1"/>
</dbReference>
<dbReference type="PANTHER" id="PTHR30420">
    <property type="entry name" value="N-SUCCINYLARGININE DIHYDROLASE"/>
    <property type="match status" value="1"/>
</dbReference>
<dbReference type="PANTHER" id="PTHR30420:SF2">
    <property type="entry name" value="N-SUCCINYLARGININE DIHYDROLASE"/>
    <property type="match status" value="1"/>
</dbReference>
<dbReference type="Pfam" id="PF04996">
    <property type="entry name" value="AstB"/>
    <property type="match status" value="1"/>
</dbReference>
<dbReference type="SUPFAM" id="SSF55909">
    <property type="entry name" value="Pentein"/>
    <property type="match status" value="1"/>
</dbReference>
<sequence>MNAQEANFDGLVGPTHNYAGLSFGNVASLNNEKSAANPKAAAKQGLRKMKQLADLGFAQGVLPPQERPSLRLLRELGFSGKDADVIAKAAKQAPELLAAASSASAMWTANAATVSPSADTSDGRVHFTPANLCSKLHRAIEHEATRRTLSTLFADPTHFAVHEALTGTPALGDEGAANHTRFCAEYGKPGIEFFVYGRAEYRRGPEPKRFPARQTFEASRAVAHRHGLAEEATVYAQQDPDVIDAGVFHNDVISVGNRDTLFTHERAFVNKQAIYDTLTAALDARGARLNVIEVPDAAVSVNDAVTSYLFNSQLLSRADGSQVLVVPQECRENANVAAYLDRLAAGNGPIHDVLVFDLRESMKNGGGPACLRLRVVLNDAERAAVTSNVWINDTLFASLDAWIDRHYRDRLAPEDLADPALLDESRTALDELTQILRVGSLYDFQR</sequence>
<proteinExistence type="inferred from homology"/>
<accession>B1JYT6</accession>
<gene>
    <name evidence="1" type="primary">astB</name>
    <name type="ordered locus">Bcenmc03_1161</name>
</gene>
<comment type="function">
    <text evidence="1">Catalyzes the hydrolysis of N(2)-succinylarginine into N(2)-succinylornithine, ammonia and CO(2).</text>
</comment>
<comment type="catalytic activity">
    <reaction evidence="1">
        <text>N(2)-succinyl-L-arginine + 2 H2O + 2 H(+) = N(2)-succinyl-L-ornithine + 2 NH4(+) + CO2</text>
        <dbReference type="Rhea" id="RHEA:19533"/>
        <dbReference type="ChEBI" id="CHEBI:15377"/>
        <dbReference type="ChEBI" id="CHEBI:15378"/>
        <dbReference type="ChEBI" id="CHEBI:16526"/>
        <dbReference type="ChEBI" id="CHEBI:28938"/>
        <dbReference type="ChEBI" id="CHEBI:58241"/>
        <dbReference type="ChEBI" id="CHEBI:58514"/>
        <dbReference type="EC" id="3.5.3.23"/>
    </reaction>
</comment>
<comment type="pathway">
    <text evidence="1">Amino-acid degradation; L-arginine degradation via AST pathway; L-glutamate and succinate from L-arginine: step 2/5.</text>
</comment>
<comment type="subunit">
    <text evidence="1">Homodimer.</text>
</comment>
<comment type="similarity">
    <text evidence="1">Belongs to the succinylarginine dihydrolase family.</text>
</comment>
<name>ASTB_BURO0</name>
<protein>
    <recommendedName>
        <fullName evidence="1">N-succinylarginine dihydrolase</fullName>
        <ecNumber evidence="1">3.5.3.23</ecNumber>
    </recommendedName>
</protein>
<keyword id="KW-0056">Arginine metabolism</keyword>
<keyword id="KW-0378">Hydrolase</keyword>
<evidence type="ECO:0000255" key="1">
    <source>
        <dbReference type="HAMAP-Rule" id="MF_01172"/>
    </source>
</evidence>
<feature type="chain" id="PRO_1000138004" description="N-succinylarginine dihydrolase">
    <location>
        <begin position="1"/>
        <end position="446"/>
    </location>
</feature>
<feature type="active site" evidence="1">
    <location>
        <position position="174"/>
    </location>
</feature>
<feature type="active site" evidence="1">
    <location>
        <position position="249"/>
    </location>
</feature>
<feature type="active site" description="Nucleophile" evidence="1">
    <location>
        <position position="370"/>
    </location>
</feature>
<feature type="binding site" evidence="1">
    <location>
        <begin position="19"/>
        <end position="28"/>
    </location>
    <ligand>
        <name>substrate</name>
    </ligand>
</feature>
<feature type="binding site" evidence="1">
    <location>
        <position position="110"/>
    </location>
    <ligand>
        <name>substrate</name>
    </ligand>
</feature>
<feature type="binding site" evidence="1">
    <location>
        <begin position="137"/>
        <end position="138"/>
    </location>
    <ligand>
        <name>substrate</name>
    </ligand>
</feature>
<feature type="binding site" evidence="1">
    <location>
        <position position="213"/>
    </location>
    <ligand>
        <name>substrate</name>
    </ligand>
</feature>
<feature type="binding site" evidence="1">
    <location>
        <position position="251"/>
    </location>
    <ligand>
        <name>substrate</name>
    </ligand>
</feature>
<feature type="binding site" evidence="1">
    <location>
        <position position="364"/>
    </location>
    <ligand>
        <name>substrate</name>
    </ligand>
</feature>
<organism>
    <name type="scientific">Burkholderia orbicola (strain MC0-3)</name>
    <dbReference type="NCBI Taxonomy" id="406425"/>
    <lineage>
        <taxon>Bacteria</taxon>
        <taxon>Pseudomonadati</taxon>
        <taxon>Pseudomonadota</taxon>
        <taxon>Betaproteobacteria</taxon>
        <taxon>Burkholderiales</taxon>
        <taxon>Burkholderiaceae</taxon>
        <taxon>Burkholderia</taxon>
        <taxon>Burkholderia cepacia complex</taxon>
        <taxon>Burkholderia orbicola</taxon>
    </lineage>
</organism>